<keyword id="KW-0028">Amino-acid biosynthesis</keyword>
<keyword id="KW-0067">ATP-binding</keyword>
<keyword id="KW-0963">Cytoplasm</keyword>
<keyword id="KW-0418">Kinase</keyword>
<keyword id="KW-0547">Nucleotide-binding</keyword>
<keyword id="KW-0641">Proline biosynthesis</keyword>
<keyword id="KW-0808">Transferase</keyword>
<proteinExistence type="inferred from homology"/>
<evidence type="ECO:0000255" key="1">
    <source>
        <dbReference type="HAMAP-Rule" id="MF_00456"/>
    </source>
</evidence>
<feature type="chain" id="PRO_0000109763" description="Glutamate 5-kinase">
    <location>
        <begin position="1"/>
        <end position="367"/>
    </location>
</feature>
<feature type="domain" description="PUA" evidence="1">
    <location>
        <begin position="275"/>
        <end position="353"/>
    </location>
</feature>
<feature type="binding site" evidence="1">
    <location>
        <position position="10"/>
    </location>
    <ligand>
        <name>ATP</name>
        <dbReference type="ChEBI" id="CHEBI:30616"/>
    </ligand>
</feature>
<feature type="binding site" evidence="1">
    <location>
        <position position="50"/>
    </location>
    <ligand>
        <name>substrate</name>
    </ligand>
</feature>
<feature type="binding site" evidence="1">
    <location>
        <position position="137"/>
    </location>
    <ligand>
        <name>substrate</name>
    </ligand>
</feature>
<feature type="binding site" evidence="1">
    <location>
        <position position="149"/>
    </location>
    <ligand>
        <name>substrate</name>
    </ligand>
</feature>
<feature type="binding site" evidence="1">
    <location>
        <begin position="169"/>
        <end position="170"/>
    </location>
    <ligand>
        <name>ATP</name>
        <dbReference type="ChEBI" id="CHEBI:30616"/>
    </ligand>
</feature>
<feature type="binding site" evidence="1">
    <location>
        <begin position="211"/>
        <end position="217"/>
    </location>
    <ligand>
        <name>ATP</name>
        <dbReference type="ChEBI" id="CHEBI:30616"/>
    </ligand>
</feature>
<name>PROB_YERPS</name>
<organism>
    <name type="scientific">Yersinia pseudotuberculosis serotype I (strain IP32953)</name>
    <dbReference type="NCBI Taxonomy" id="273123"/>
    <lineage>
        <taxon>Bacteria</taxon>
        <taxon>Pseudomonadati</taxon>
        <taxon>Pseudomonadota</taxon>
        <taxon>Gammaproteobacteria</taxon>
        <taxon>Enterobacterales</taxon>
        <taxon>Yersiniaceae</taxon>
        <taxon>Yersinia</taxon>
    </lineage>
</organism>
<gene>
    <name evidence="1" type="primary">proB</name>
    <name type="ordered locus">YPTB0904</name>
</gene>
<dbReference type="EC" id="2.7.2.11" evidence="1"/>
<dbReference type="EMBL" id="BX936398">
    <property type="protein sequence ID" value="CAH20144.1"/>
    <property type="molecule type" value="Genomic_DNA"/>
</dbReference>
<dbReference type="RefSeq" id="WP_002208701.1">
    <property type="nucleotide sequence ID" value="NZ_CP009712.1"/>
</dbReference>
<dbReference type="SMR" id="Q66DY9"/>
<dbReference type="GeneID" id="57975496"/>
<dbReference type="KEGG" id="ypo:BZ17_1642"/>
<dbReference type="KEGG" id="yps:YPTB0904"/>
<dbReference type="PATRIC" id="fig|273123.14.peg.1745"/>
<dbReference type="UniPathway" id="UPA00098">
    <property type="reaction ID" value="UER00359"/>
</dbReference>
<dbReference type="Proteomes" id="UP000001011">
    <property type="component" value="Chromosome"/>
</dbReference>
<dbReference type="GO" id="GO:0005829">
    <property type="term" value="C:cytosol"/>
    <property type="evidence" value="ECO:0007669"/>
    <property type="project" value="TreeGrafter"/>
</dbReference>
<dbReference type="GO" id="GO:0005524">
    <property type="term" value="F:ATP binding"/>
    <property type="evidence" value="ECO:0007669"/>
    <property type="project" value="UniProtKB-KW"/>
</dbReference>
<dbReference type="GO" id="GO:0004349">
    <property type="term" value="F:glutamate 5-kinase activity"/>
    <property type="evidence" value="ECO:0007669"/>
    <property type="project" value="UniProtKB-UniRule"/>
</dbReference>
<dbReference type="GO" id="GO:0003723">
    <property type="term" value="F:RNA binding"/>
    <property type="evidence" value="ECO:0007669"/>
    <property type="project" value="InterPro"/>
</dbReference>
<dbReference type="GO" id="GO:0055129">
    <property type="term" value="P:L-proline biosynthetic process"/>
    <property type="evidence" value="ECO:0007669"/>
    <property type="project" value="UniProtKB-UniRule"/>
</dbReference>
<dbReference type="CDD" id="cd04242">
    <property type="entry name" value="AAK_G5K_ProB"/>
    <property type="match status" value="1"/>
</dbReference>
<dbReference type="CDD" id="cd21157">
    <property type="entry name" value="PUA_G5K"/>
    <property type="match status" value="1"/>
</dbReference>
<dbReference type="FunFam" id="2.30.130.10:FF:000003">
    <property type="entry name" value="Glutamate 5-kinase"/>
    <property type="match status" value="1"/>
</dbReference>
<dbReference type="FunFam" id="3.40.1160.10:FF:000006">
    <property type="entry name" value="Glutamate 5-kinase"/>
    <property type="match status" value="1"/>
</dbReference>
<dbReference type="Gene3D" id="3.40.1160.10">
    <property type="entry name" value="Acetylglutamate kinase-like"/>
    <property type="match status" value="2"/>
</dbReference>
<dbReference type="Gene3D" id="2.30.130.10">
    <property type="entry name" value="PUA domain"/>
    <property type="match status" value="1"/>
</dbReference>
<dbReference type="HAMAP" id="MF_00456">
    <property type="entry name" value="ProB"/>
    <property type="match status" value="1"/>
</dbReference>
<dbReference type="InterPro" id="IPR036393">
    <property type="entry name" value="AceGlu_kinase-like_sf"/>
</dbReference>
<dbReference type="InterPro" id="IPR001048">
    <property type="entry name" value="Asp/Glu/Uridylate_kinase"/>
</dbReference>
<dbReference type="InterPro" id="IPR041739">
    <property type="entry name" value="G5K_ProB"/>
</dbReference>
<dbReference type="InterPro" id="IPR001057">
    <property type="entry name" value="Glu/AcGlu_kinase"/>
</dbReference>
<dbReference type="InterPro" id="IPR011529">
    <property type="entry name" value="Glu_5kinase"/>
</dbReference>
<dbReference type="InterPro" id="IPR005715">
    <property type="entry name" value="Glu_5kinase/COase_Synthase"/>
</dbReference>
<dbReference type="InterPro" id="IPR019797">
    <property type="entry name" value="Glutamate_5-kinase_CS"/>
</dbReference>
<dbReference type="InterPro" id="IPR002478">
    <property type="entry name" value="PUA"/>
</dbReference>
<dbReference type="InterPro" id="IPR015947">
    <property type="entry name" value="PUA-like_sf"/>
</dbReference>
<dbReference type="InterPro" id="IPR036974">
    <property type="entry name" value="PUA_sf"/>
</dbReference>
<dbReference type="NCBIfam" id="TIGR01027">
    <property type="entry name" value="proB"/>
    <property type="match status" value="1"/>
</dbReference>
<dbReference type="PANTHER" id="PTHR43654">
    <property type="entry name" value="GLUTAMATE 5-KINASE"/>
    <property type="match status" value="1"/>
</dbReference>
<dbReference type="PANTHER" id="PTHR43654:SF1">
    <property type="entry name" value="ISOPENTENYL PHOSPHATE KINASE"/>
    <property type="match status" value="1"/>
</dbReference>
<dbReference type="Pfam" id="PF00696">
    <property type="entry name" value="AA_kinase"/>
    <property type="match status" value="1"/>
</dbReference>
<dbReference type="Pfam" id="PF01472">
    <property type="entry name" value="PUA"/>
    <property type="match status" value="1"/>
</dbReference>
<dbReference type="PIRSF" id="PIRSF000729">
    <property type="entry name" value="GK"/>
    <property type="match status" value="1"/>
</dbReference>
<dbReference type="PRINTS" id="PR00474">
    <property type="entry name" value="GLU5KINASE"/>
</dbReference>
<dbReference type="SMART" id="SM00359">
    <property type="entry name" value="PUA"/>
    <property type="match status" value="1"/>
</dbReference>
<dbReference type="SUPFAM" id="SSF53633">
    <property type="entry name" value="Carbamate kinase-like"/>
    <property type="match status" value="1"/>
</dbReference>
<dbReference type="SUPFAM" id="SSF88697">
    <property type="entry name" value="PUA domain-like"/>
    <property type="match status" value="1"/>
</dbReference>
<dbReference type="PROSITE" id="PS00902">
    <property type="entry name" value="GLUTAMATE_5_KINASE"/>
    <property type="match status" value="1"/>
</dbReference>
<dbReference type="PROSITE" id="PS50890">
    <property type="entry name" value="PUA"/>
    <property type="match status" value="1"/>
</dbReference>
<reference key="1">
    <citation type="journal article" date="2004" name="Proc. Natl. Acad. Sci. U.S.A.">
        <title>Insights into the evolution of Yersinia pestis through whole-genome comparison with Yersinia pseudotuberculosis.</title>
        <authorList>
            <person name="Chain P.S.G."/>
            <person name="Carniel E."/>
            <person name="Larimer F.W."/>
            <person name="Lamerdin J."/>
            <person name="Stoutland P.O."/>
            <person name="Regala W.M."/>
            <person name="Georgescu A.M."/>
            <person name="Vergez L.M."/>
            <person name="Land M.L."/>
            <person name="Motin V.L."/>
            <person name="Brubaker R.R."/>
            <person name="Fowler J."/>
            <person name="Hinnebusch J."/>
            <person name="Marceau M."/>
            <person name="Medigue C."/>
            <person name="Simonet M."/>
            <person name="Chenal-Francisque V."/>
            <person name="Souza B."/>
            <person name="Dacheux D."/>
            <person name="Elliott J.M."/>
            <person name="Derbise A."/>
            <person name="Hauser L.J."/>
            <person name="Garcia E."/>
        </authorList>
    </citation>
    <scope>NUCLEOTIDE SEQUENCE [LARGE SCALE GENOMIC DNA]</scope>
    <source>
        <strain>IP32953</strain>
    </source>
</reference>
<sequence>MSGSQTLVVKLGTSVLTGGSRRLNRAHIVELVRQCAQQHAKGHRIVIVTSGAIAAGREHLGYPELPATIASKQLLAAVGQSRLIQLWEQLFSIYGIHIGQMLLTRADLEDRERFLNARDTMNALLDNRIVPVINENDAVATAEIKVGDNDNLSALAAILASADKLLLLTDQAGLYTADPRNNPEAELIREVHGIDDVLRGMAGDSVSGLGTGGMATKLQAADVACRAGIDVVIAAGSQVGVIADVIDGTPVGTRFHSLETPLENRKRWIFGAPPAGEITVDDGAVFAIMERGSSLLPKGIRSVKGDFSRGEVIRIRNLNGRDLAHGVSRYNSDALRMLAGHHSQQISEILGYEYGPVAVHRDDMIVS</sequence>
<comment type="function">
    <text evidence="1">Catalyzes the transfer of a phosphate group to glutamate to form L-glutamate 5-phosphate.</text>
</comment>
<comment type="catalytic activity">
    <reaction evidence="1">
        <text>L-glutamate + ATP = L-glutamyl 5-phosphate + ADP</text>
        <dbReference type="Rhea" id="RHEA:14877"/>
        <dbReference type="ChEBI" id="CHEBI:29985"/>
        <dbReference type="ChEBI" id="CHEBI:30616"/>
        <dbReference type="ChEBI" id="CHEBI:58274"/>
        <dbReference type="ChEBI" id="CHEBI:456216"/>
        <dbReference type="EC" id="2.7.2.11"/>
    </reaction>
</comment>
<comment type="pathway">
    <text evidence="1">Amino-acid biosynthesis; L-proline biosynthesis; L-glutamate 5-semialdehyde from L-glutamate: step 1/2.</text>
</comment>
<comment type="subcellular location">
    <subcellularLocation>
        <location evidence="1">Cytoplasm</location>
    </subcellularLocation>
</comment>
<comment type="similarity">
    <text evidence="1">Belongs to the glutamate 5-kinase family.</text>
</comment>
<accession>Q66DY9</accession>
<protein>
    <recommendedName>
        <fullName evidence="1">Glutamate 5-kinase</fullName>
        <ecNumber evidence="1">2.7.2.11</ecNumber>
    </recommendedName>
    <alternativeName>
        <fullName evidence="1">Gamma-glutamyl kinase</fullName>
        <shortName evidence="1">GK</shortName>
    </alternativeName>
</protein>